<evidence type="ECO:0000255" key="1">
    <source>
        <dbReference type="HAMAP-Rule" id="MF_00546"/>
    </source>
</evidence>
<evidence type="ECO:0000256" key="2">
    <source>
        <dbReference type="SAM" id="MobiDB-lite"/>
    </source>
</evidence>
<keyword id="KW-0574">Periplasm</keyword>
<keyword id="KW-0732">Signal</keyword>
<protein>
    <recommendedName>
        <fullName evidence="1">Acid shock protein</fullName>
    </recommendedName>
</protein>
<sequence>MKKVLALVVAAAMGLSSAAFAAETAITPAPTATTTKAAPAKTTHHKKQHKAAPAQKAQAAKKHHKNAKAEQKAPEQKAQAAKKHAKKHSHQQPAKPAAQPAA</sequence>
<gene>
    <name evidence="1" type="primary">asr</name>
    <name type="ordered locus">ECED1_1766</name>
</gene>
<organism>
    <name type="scientific">Escherichia coli O81 (strain ED1a)</name>
    <dbReference type="NCBI Taxonomy" id="585397"/>
    <lineage>
        <taxon>Bacteria</taxon>
        <taxon>Pseudomonadati</taxon>
        <taxon>Pseudomonadota</taxon>
        <taxon>Gammaproteobacteria</taxon>
        <taxon>Enterobacterales</taxon>
        <taxon>Enterobacteriaceae</taxon>
        <taxon>Escherichia</taxon>
    </lineage>
</organism>
<dbReference type="EMBL" id="CU928162">
    <property type="protein sequence ID" value="CAR07960.2"/>
    <property type="molecule type" value="Genomic_DNA"/>
</dbReference>
<dbReference type="RefSeq" id="WP_012601529.1">
    <property type="nucleotide sequence ID" value="NC_011745.1"/>
</dbReference>
<dbReference type="KEGG" id="ecq:ECED1_1766"/>
<dbReference type="HOGENOM" id="CLU_102486_2_0_6"/>
<dbReference type="Proteomes" id="UP000000748">
    <property type="component" value="Chromosome"/>
</dbReference>
<dbReference type="GO" id="GO:0042597">
    <property type="term" value="C:periplasmic space"/>
    <property type="evidence" value="ECO:0007669"/>
    <property type="project" value="UniProtKB-SubCell"/>
</dbReference>
<dbReference type="HAMAP" id="MF_00546">
    <property type="entry name" value="Asr"/>
    <property type="match status" value="1"/>
</dbReference>
<dbReference type="InterPro" id="IPR023497">
    <property type="entry name" value="Acid_shock"/>
</dbReference>
<dbReference type="NCBIfam" id="NF033636">
    <property type="entry name" value="acid_shock_Asr"/>
    <property type="match status" value="1"/>
</dbReference>
<dbReference type="Pfam" id="PF06392">
    <property type="entry name" value="Asr"/>
    <property type="match status" value="1"/>
</dbReference>
<accession>B7MV44</accession>
<reference key="1">
    <citation type="journal article" date="2009" name="PLoS Genet.">
        <title>Organised genome dynamics in the Escherichia coli species results in highly diverse adaptive paths.</title>
        <authorList>
            <person name="Touchon M."/>
            <person name="Hoede C."/>
            <person name="Tenaillon O."/>
            <person name="Barbe V."/>
            <person name="Baeriswyl S."/>
            <person name="Bidet P."/>
            <person name="Bingen E."/>
            <person name="Bonacorsi S."/>
            <person name="Bouchier C."/>
            <person name="Bouvet O."/>
            <person name="Calteau A."/>
            <person name="Chiapello H."/>
            <person name="Clermont O."/>
            <person name="Cruveiller S."/>
            <person name="Danchin A."/>
            <person name="Diard M."/>
            <person name="Dossat C."/>
            <person name="Karoui M.E."/>
            <person name="Frapy E."/>
            <person name="Garry L."/>
            <person name="Ghigo J.M."/>
            <person name="Gilles A.M."/>
            <person name="Johnson J."/>
            <person name="Le Bouguenec C."/>
            <person name="Lescat M."/>
            <person name="Mangenot S."/>
            <person name="Martinez-Jehanne V."/>
            <person name="Matic I."/>
            <person name="Nassif X."/>
            <person name="Oztas S."/>
            <person name="Petit M.A."/>
            <person name="Pichon C."/>
            <person name="Rouy Z."/>
            <person name="Ruf C.S."/>
            <person name="Schneider D."/>
            <person name="Tourret J."/>
            <person name="Vacherie B."/>
            <person name="Vallenet D."/>
            <person name="Medigue C."/>
            <person name="Rocha E.P.C."/>
            <person name="Denamur E."/>
        </authorList>
    </citation>
    <scope>NUCLEOTIDE SEQUENCE [LARGE SCALE GENOMIC DNA]</scope>
    <source>
        <strain>ED1a</strain>
    </source>
</reference>
<proteinExistence type="inferred from homology"/>
<feature type="signal peptide" evidence="1">
    <location>
        <begin position="1"/>
        <end position="21"/>
    </location>
</feature>
<feature type="propeptide" id="PRO_1000146601" evidence="1">
    <location>
        <begin position="22"/>
        <end position="58"/>
    </location>
</feature>
<feature type="chain" id="PRO_1000146602" description="Acid shock protein">
    <location>
        <begin position="59"/>
        <end position="102"/>
    </location>
</feature>
<feature type="region of interest" description="Disordered" evidence="2">
    <location>
        <begin position="26"/>
        <end position="102"/>
    </location>
</feature>
<feature type="compositionally biased region" description="Low complexity" evidence="2">
    <location>
        <begin position="26"/>
        <end position="41"/>
    </location>
</feature>
<feature type="compositionally biased region" description="Basic residues" evidence="2">
    <location>
        <begin position="80"/>
        <end position="90"/>
    </location>
</feature>
<feature type="compositionally biased region" description="Low complexity" evidence="2">
    <location>
        <begin position="91"/>
        <end position="102"/>
    </location>
</feature>
<comment type="function">
    <text evidence="1">Required for growth and/or survival at acidic conditions.</text>
</comment>
<comment type="subcellular location">
    <subcellularLocation>
        <location evidence="1">Periplasm</location>
    </subcellularLocation>
</comment>
<comment type="PTM">
    <text evidence="1">Proteolytic processing gives rise to the active protein.</text>
</comment>
<comment type="similarity">
    <text evidence="1">Belongs to the Asr family.</text>
</comment>
<name>ASR_ECO81</name>